<protein>
    <recommendedName>
        <fullName evidence="1">Methionyl-tRNA formyltransferase</fullName>
        <ecNumber evidence="1">2.1.2.9</ecNumber>
    </recommendedName>
</protein>
<reference key="1">
    <citation type="submission" date="2008-06" db="EMBL/GenBank/DDBJ databases">
        <title>Genome and proteome analysis of A. pleuropneumoniae serotype 7.</title>
        <authorList>
            <person name="Linke B."/>
            <person name="Buettner F."/>
            <person name="Martinez-Arias R."/>
            <person name="Goesmann A."/>
            <person name="Baltes N."/>
            <person name="Tegetmeyer H."/>
            <person name="Singh M."/>
            <person name="Gerlach G.F."/>
        </authorList>
    </citation>
    <scope>NUCLEOTIDE SEQUENCE [LARGE SCALE GENOMIC DNA]</scope>
    <source>
        <strain>AP76</strain>
    </source>
</reference>
<gene>
    <name evidence="1" type="primary">fmt</name>
    <name type="ordered locus">APP7_1649</name>
</gene>
<proteinExistence type="inferred from homology"/>
<sequence>MSKLNIIFAGTPDFAAQHLQALLDSEHNVIAVYTQPDKPAGRGKKLQASPVKQLAEQHNIPVYQPKSLRKEDAQAELKALNADVMVVVAYGLILPEAVLNAPKYGCLNVHGSLLPRWRGAAPIQRSIWAGDQETGVTIMQMDIGLDTGDMLHKVTTPIAADETSASLYAKLAELAPPALLEVLNGLESQAFKAEKQDEALSNYAEKLSKEEAKLDWNLTACQLERNIRAFNPWPISFLTLEVDGVEQSVKVYQANVLPHQAKAAGTVLQADKNGIQIATQEGVLNITQLQPSGKKPMSVQDFLNGRADWFAVGKQL</sequence>
<comment type="function">
    <text evidence="1">Attaches a formyl group to the free amino group of methionyl-tRNA(fMet). The formyl group appears to play a dual role in the initiator identity of N-formylmethionyl-tRNA by promoting its recognition by IF2 and preventing the misappropriation of this tRNA by the elongation apparatus.</text>
</comment>
<comment type="catalytic activity">
    <reaction evidence="1">
        <text>L-methionyl-tRNA(fMet) + (6R)-10-formyltetrahydrofolate = N-formyl-L-methionyl-tRNA(fMet) + (6S)-5,6,7,8-tetrahydrofolate + H(+)</text>
        <dbReference type="Rhea" id="RHEA:24380"/>
        <dbReference type="Rhea" id="RHEA-COMP:9952"/>
        <dbReference type="Rhea" id="RHEA-COMP:9953"/>
        <dbReference type="ChEBI" id="CHEBI:15378"/>
        <dbReference type="ChEBI" id="CHEBI:57453"/>
        <dbReference type="ChEBI" id="CHEBI:78530"/>
        <dbReference type="ChEBI" id="CHEBI:78844"/>
        <dbReference type="ChEBI" id="CHEBI:195366"/>
        <dbReference type="EC" id="2.1.2.9"/>
    </reaction>
</comment>
<comment type="similarity">
    <text evidence="1">Belongs to the Fmt family.</text>
</comment>
<accession>B3GYS0</accession>
<feature type="chain" id="PRO_1000098371" description="Methionyl-tRNA formyltransferase">
    <location>
        <begin position="1"/>
        <end position="316"/>
    </location>
</feature>
<feature type="binding site" evidence="1">
    <location>
        <begin position="112"/>
        <end position="115"/>
    </location>
    <ligand>
        <name>(6S)-5,6,7,8-tetrahydrofolate</name>
        <dbReference type="ChEBI" id="CHEBI:57453"/>
    </ligand>
</feature>
<name>FMT_ACTP7</name>
<dbReference type="EC" id="2.1.2.9" evidence="1"/>
<dbReference type="EMBL" id="CP001091">
    <property type="protein sequence ID" value="ACE62301.1"/>
    <property type="molecule type" value="Genomic_DNA"/>
</dbReference>
<dbReference type="RefSeq" id="WP_005598937.1">
    <property type="nucleotide sequence ID" value="NC_010939.1"/>
</dbReference>
<dbReference type="SMR" id="B3GYS0"/>
<dbReference type="GeneID" id="48599873"/>
<dbReference type="KEGG" id="apa:APP7_1649"/>
<dbReference type="HOGENOM" id="CLU_033347_1_2_6"/>
<dbReference type="Proteomes" id="UP000001226">
    <property type="component" value="Chromosome"/>
</dbReference>
<dbReference type="GO" id="GO:0005829">
    <property type="term" value="C:cytosol"/>
    <property type="evidence" value="ECO:0007669"/>
    <property type="project" value="TreeGrafter"/>
</dbReference>
<dbReference type="GO" id="GO:0004479">
    <property type="term" value="F:methionyl-tRNA formyltransferase activity"/>
    <property type="evidence" value="ECO:0007669"/>
    <property type="project" value="UniProtKB-UniRule"/>
</dbReference>
<dbReference type="CDD" id="cd08646">
    <property type="entry name" value="FMT_core_Met-tRNA-FMT_N"/>
    <property type="match status" value="1"/>
</dbReference>
<dbReference type="CDD" id="cd08704">
    <property type="entry name" value="Met_tRNA_FMT_C"/>
    <property type="match status" value="1"/>
</dbReference>
<dbReference type="FunFam" id="3.40.50.12230:FF:000001">
    <property type="entry name" value="Methionyl-tRNA formyltransferase"/>
    <property type="match status" value="1"/>
</dbReference>
<dbReference type="FunFam" id="3.40.50.170:FF:000003">
    <property type="entry name" value="Methionyl-tRNA formyltransferase"/>
    <property type="match status" value="1"/>
</dbReference>
<dbReference type="Gene3D" id="3.10.25.10">
    <property type="entry name" value="Formyl transferase, C-terminal domain"/>
    <property type="match status" value="1"/>
</dbReference>
<dbReference type="Gene3D" id="3.40.50.170">
    <property type="entry name" value="Formyl transferase, N-terminal domain"/>
    <property type="match status" value="1"/>
</dbReference>
<dbReference type="HAMAP" id="MF_00182">
    <property type="entry name" value="Formyl_trans"/>
    <property type="match status" value="1"/>
</dbReference>
<dbReference type="InterPro" id="IPR005794">
    <property type="entry name" value="Fmt"/>
</dbReference>
<dbReference type="InterPro" id="IPR005793">
    <property type="entry name" value="Formyl_trans_C"/>
</dbReference>
<dbReference type="InterPro" id="IPR037022">
    <property type="entry name" value="Formyl_trans_C_sf"/>
</dbReference>
<dbReference type="InterPro" id="IPR002376">
    <property type="entry name" value="Formyl_transf_N"/>
</dbReference>
<dbReference type="InterPro" id="IPR036477">
    <property type="entry name" value="Formyl_transf_N_sf"/>
</dbReference>
<dbReference type="InterPro" id="IPR011034">
    <property type="entry name" value="Formyl_transferase-like_C_sf"/>
</dbReference>
<dbReference type="InterPro" id="IPR001555">
    <property type="entry name" value="GART_AS"/>
</dbReference>
<dbReference type="InterPro" id="IPR044135">
    <property type="entry name" value="Met-tRNA-FMT_C"/>
</dbReference>
<dbReference type="InterPro" id="IPR041711">
    <property type="entry name" value="Met-tRNA-FMT_N"/>
</dbReference>
<dbReference type="NCBIfam" id="TIGR00460">
    <property type="entry name" value="fmt"/>
    <property type="match status" value="1"/>
</dbReference>
<dbReference type="PANTHER" id="PTHR11138">
    <property type="entry name" value="METHIONYL-TRNA FORMYLTRANSFERASE"/>
    <property type="match status" value="1"/>
</dbReference>
<dbReference type="PANTHER" id="PTHR11138:SF5">
    <property type="entry name" value="METHIONYL-TRNA FORMYLTRANSFERASE, MITOCHONDRIAL"/>
    <property type="match status" value="1"/>
</dbReference>
<dbReference type="Pfam" id="PF02911">
    <property type="entry name" value="Formyl_trans_C"/>
    <property type="match status" value="1"/>
</dbReference>
<dbReference type="Pfam" id="PF00551">
    <property type="entry name" value="Formyl_trans_N"/>
    <property type="match status" value="1"/>
</dbReference>
<dbReference type="SUPFAM" id="SSF50486">
    <property type="entry name" value="FMT C-terminal domain-like"/>
    <property type="match status" value="1"/>
</dbReference>
<dbReference type="SUPFAM" id="SSF53328">
    <property type="entry name" value="Formyltransferase"/>
    <property type="match status" value="1"/>
</dbReference>
<dbReference type="PROSITE" id="PS00373">
    <property type="entry name" value="GART"/>
    <property type="match status" value="1"/>
</dbReference>
<organism>
    <name type="scientific">Actinobacillus pleuropneumoniae serotype 7 (strain AP76)</name>
    <dbReference type="NCBI Taxonomy" id="537457"/>
    <lineage>
        <taxon>Bacteria</taxon>
        <taxon>Pseudomonadati</taxon>
        <taxon>Pseudomonadota</taxon>
        <taxon>Gammaproteobacteria</taxon>
        <taxon>Pasteurellales</taxon>
        <taxon>Pasteurellaceae</taxon>
        <taxon>Actinobacillus</taxon>
    </lineage>
</organism>
<keyword id="KW-0648">Protein biosynthesis</keyword>
<keyword id="KW-0808">Transferase</keyword>
<evidence type="ECO:0000255" key="1">
    <source>
        <dbReference type="HAMAP-Rule" id="MF_00182"/>
    </source>
</evidence>